<reference key="1">
    <citation type="submission" date="2005-01" db="EMBL/GenBank/DDBJ databases">
        <title>A superfamily of membrane-associated DHHC type zinc finger proteins.</title>
        <authorList>
            <person name="Huang C.-H."/>
            <person name="Chen Y."/>
            <person name="Ye T."/>
        </authorList>
    </citation>
    <scope>NUCLEOTIDE SEQUENCE [MRNA]</scope>
</reference>
<reference key="2">
    <citation type="journal article" date="2004" name="Nature">
        <title>Genome sequence of the Brown Norway rat yields insights into mammalian evolution.</title>
        <authorList>
            <person name="Gibbs R.A."/>
            <person name="Weinstock G.M."/>
            <person name="Metzker M.L."/>
            <person name="Muzny D.M."/>
            <person name="Sodergren E.J."/>
            <person name="Scherer S."/>
            <person name="Scott G."/>
            <person name="Steffen D."/>
            <person name="Worley K.C."/>
            <person name="Burch P.E."/>
            <person name="Okwuonu G."/>
            <person name="Hines S."/>
            <person name="Lewis L."/>
            <person name="Deramo C."/>
            <person name="Delgado O."/>
            <person name="Dugan-Rocha S."/>
            <person name="Miner G."/>
            <person name="Morgan M."/>
            <person name="Hawes A."/>
            <person name="Gill R."/>
            <person name="Holt R.A."/>
            <person name="Adams M.D."/>
            <person name="Amanatides P.G."/>
            <person name="Baden-Tillson H."/>
            <person name="Barnstead M."/>
            <person name="Chin S."/>
            <person name="Evans C.A."/>
            <person name="Ferriera S."/>
            <person name="Fosler C."/>
            <person name="Glodek A."/>
            <person name="Gu Z."/>
            <person name="Jennings D."/>
            <person name="Kraft C.L."/>
            <person name="Nguyen T."/>
            <person name="Pfannkoch C.M."/>
            <person name="Sitter C."/>
            <person name="Sutton G.G."/>
            <person name="Venter J.C."/>
            <person name="Woodage T."/>
            <person name="Smith D."/>
            <person name="Lee H.-M."/>
            <person name="Gustafson E."/>
            <person name="Cahill P."/>
            <person name="Kana A."/>
            <person name="Doucette-Stamm L."/>
            <person name="Weinstock K."/>
            <person name="Fechtel K."/>
            <person name="Weiss R.B."/>
            <person name="Dunn D.M."/>
            <person name="Green E.D."/>
            <person name="Blakesley R.W."/>
            <person name="Bouffard G.G."/>
            <person name="De Jong P.J."/>
            <person name="Osoegawa K."/>
            <person name="Zhu B."/>
            <person name="Marra M."/>
            <person name="Schein J."/>
            <person name="Bosdet I."/>
            <person name="Fjell C."/>
            <person name="Jones S."/>
            <person name="Krzywinski M."/>
            <person name="Mathewson C."/>
            <person name="Siddiqui A."/>
            <person name="Wye N."/>
            <person name="McPherson J."/>
            <person name="Zhao S."/>
            <person name="Fraser C.M."/>
            <person name="Shetty J."/>
            <person name="Shatsman S."/>
            <person name="Geer K."/>
            <person name="Chen Y."/>
            <person name="Abramzon S."/>
            <person name="Nierman W.C."/>
            <person name="Havlak P.H."/>
            <person name="Chen R."/>
            <person name="Durbin K.J."/>
            <person name="Egan A."/>
            <person name="Ren Y."/>
            <person name="Song X.-Z."/>
            <person name="Li B."/>
            <person name="Liu Y."/>
            <person name="Qin X."/>
            <person name="Cawley S."/>
            <person name="Cooney A.J."/>
            <person name="D'Souza L.M."/>
            <person name="Martin K."/>
            <person name="Wu J.Q."/>
            <person name="Gonzalez-Garay M.L."/>
            <person name="Jackson A.R."/>
            <person name="Kalafus K.J."/>
            <person name="McLeod M.P."/>
            <person name="Milosavljevic A."/>
            <person name="Virk D."/>
            <person name="Volkov A."/>
            <person name="Wheeler D.A."/>
            <person name="Zhang Z."/>
            <person name="Bailey J.A."/>
            <person name="Eichler E.E."/>
            <person name="Tuzun E."/>
            <person name="Birney E."/>
            <person name="Mongin E."/>
            <person name="Ureta-Vidal A."/>
            <person name="Woodwark C."/>
            <person name="Zdobnov E."/>
            <person name="Bork P."/>
            <person name="Suyama M."/>
            <person name="Torrents D."/>
            <person name="Alexandersson M."/>
            <person name="Trask B.J."/>
            <person name="Young J.M."/>
            <person name="Huang H."/>
            <person name="Wang H."/>
            <person name="Xing H."/>
            <person name="Daniels S."/>
            <person name="Gietzen D."/>
            <person name="Schmidt J."/>
            <person name="Stevens K."/>
            <person name="Vitt U."/>
            <person name="Wingrove J."/>
            <person name="Camara F."/>
            <person name="Mar Alba M."/>
            <person name="Abril J.F."/>
            <person name="Guigo R."/>
            <person name="Smit A."/>
            <person name="Dubchak I."/>
            <person name="Rubin E.M."/>
            <person name="Couronne O."/>
            <person name="Poliakov A."/>
            <person name="Huebner N."/>
            <person name="Ganten D."/>
            <person name="Goesele C."/>
            <person name="Hummel O."/>
            <person name="Kreitler T."/>
            <person name="Lee Y.-A."/>
            <person name="Monti J."/>
            <person name="Schulz H."/>
            <person name="Zimdahl H."/>
            <person name="Himmelbauer H."/>
            <person name="Lehrach H."/>
            <person name="Jacob H.J."/>
            <person name="Bromberg S."/>
            <person name="Gullings-Handley J."/>
            <person name="Jensen-Seaman M.I."/>
            <person name="Kwitek A.E."/>
            <person name="Lazar J."/>
            <person name="Pasko D."/>
            <person name="Tonellato P.J."/>
            <person name="Twigger S."/>
            <person name="Ponting C.P."/>
            <person name="Duarte J.M."/>
            <person name="Rice S."/>
            <person name="Goodstadt L."/>
            <person name="Beatson S.A."/>
            <person name="Emes R.D."/>
            <person name="Winter E.E."/>
            <person name="Webber C."/>
            <person name="Brandt P."/>
            <person name="Nyakatura G."/>
            <person name="Adetobi M."/>
            <person name="Chiaromonte F."/>
            <person name="Elnitski L."/>
            <person name="Eswara P."/>
            <person name="Hardison R.C."/>
            <person name="Hou M."/>
            <person name="Kolbe D."/>
            <person name="Makova K."/>
            <person name="Miller W."/>
            <person name="Nekrutenko A."/>
            <person name="Riemer C."/>
            <person name="Schwartz S."/>
            <person name="Taylor J."/>
            <person name="Yang S."/>
            <person name="Zhang Y."/>
            <person name="Lindpaintner K."/>
            <person name="Andrews T.D."/>
            <person name="Caccamo M."/>
            <person name="Clamp M."/>
            <person name="Clarke L."/>
            <person name="Curwen V."/>
            <person name="Durbin R.M."/>
            <person name="Eyras E."/>
            <person name="Searle S.M."/>
            <person name="Cooper G.M."/>
            <person name="Batzoglou S."/>
            <person name="Brudno M."/>
            <person name="Sidow A."/>
            <person name="Stone E.A."/>
            <person name="Payseur B.A."/>
            <person name="Bourque G."/>
            <person name="Lopez-Otin C."/>
            <person name="Puente X.S."/>
            <person name="Chakrabarti K."/>
            <person name="Chatterji S."/>
            <person name="Dewey C."/>
            <person name="Pachter L."/>
            <person name="Bray N."/>
            <person name="Yap V.B."/>
            <person name="Caspi A."/>
            <person name="Tesler G."/>
            <person name="Pevzner P.A."/>
            <person name="Haussler D."/>
            <person name="Roskin K.M."/>
            <person name="Baertsch R."/>
            <person name="Clawson H."/>
            <person name="Furey T.S."/>
            <person name="Hinrichs A.S."/>
            <person name="Karolchik D."/>
            <person name="Kent W.J."/>
            <person name="Rosenbloom K.R."/>
            <person name="Trumbower H."/>
            <person name="Weirauch M."/>
            <person name="Cooper D.N."/>
            <person name="Stenson P.D."/>
            <person name="Ma B."/>
            <person name="Brent M."/>
            <person name="Arumugam M."/>
            <person name="Shteynberg D."/>
            <person name="Copley R.R."/>
            <person name="Taylor M.S."/>
            <person name="Riethman H."/>
            <person name="Mudunuri U."/>
            <person name="Peterson J."/>
            <person name="Guyer M."/>
            <person name="Felsenfeld A."/>
            <person name="Old S."/>
            <person name="Mockrin S."/>
            <person name="Collins F.S."/>
        </authorList>
    </citation>
    <scope>NUCLEOTIDE SEQUENCE [LARGE SCALE GENOMIC DNA]</scope>
    <source>
        <strain>Brown Norway</strain>
    </source>
</reference>
<reference key="3">
    <citation type="journal article" date="2014" name="Mol. Biol. Cell">
        <title>The Golgi S-acylation machinery comprises zDHHC enzymes with major differences in substrate affinity and S-acylation activity.</title>
        <authorList>
            <person name="Lemonidis K."/>
            <person name="Gorleku O.A."/>
            <person name="Sanchez-Perez M.C."/>
            <person name="Grefen C."/>
            <person name="Chamberlain L.H."/>
        </authorList>
    </citation>
    <scope>INTERACTION WITH DNAJC5 AND SNAP25</scope>
</reference>
<reference key="4">
    <citation type="journal article" date="2015" name="J. Biol. Chem.">
        <title>Identification of a novel sequence motif recognized by the ankyrin repeat domain of zDHHC17/13 S-acyltransferases.</title>
        <authorList>
            <person name="Lemonidis K."/>
            <person name="Sanchez-Perez M.C."/>
            <person name="Chamberlain L.H."/>
        </authorList>
    </citation>
    <scope>INTERACTION WITH SNAP25</scope>
</reference>
<sequence length="622" mass="71319">MADGPDEYDTETGCVPLLHPEEIKPQSHYNHGYGEPLGRKTHVDDYSTWDIVKATQYGIYERCRELVEAGYDVRQPDKENVTLLHWAAINNRIDLVKYYISKGAIVDQLGGDLNSTPLHWATRQGHLSMVVQLMKYGADPSLIDGEGCSCIHLAAQFGHTSIVAYLIAKGQDVDMMDQNGMTPLMWAAYRTHSVDPTRLLLTFNVSVNLGDKYHKNTALHWAVLAGNTTVISLLLEAGGNVDAQNVKGESALDLAKQRKNVWMINHLQEARQAKGYDNPSFLRKLKADKEFRQKVMLGTPFLVIWLVGFIADLNIDSWLIKGLMYGGVWATVQFLSKSFFDHSMHSALPLGIYLATKFWMYVTWFFWFWNDLSFLSIHLPFLANSVALFYNFGKSWKSDPGIIKATEEQKKKTIVELAETGSLDLSIFCSTCLIRKPVRSKHCGVCNRCIAKFDHHCPWVGNCVGAGNHRYFMGYLFFLLFMICWMIYGCVSYWGLHCETTYTKDGFWTYITQIATCSPWMFWMFLNSVFHFMWVAVLLMCQMYQITCLGITTNERMNARRYKHFKVTTTSIESPFNHGCVRNIIDFFEFRCCGLFRPVIVDWTRQYTIEYDQISGSGYQLV</sequence>
<gene>
    <name evidence="8" type="primary">Zdhhc17</name>
</gene>
<accession>E9PTT0</accession>
<accession>Q2TGJ2</accession>
<keyword id="KW-0012">Acyltransferase</keyword>
<keyword id="KW-0040">ANK repeat</keyword>
<keyword id="KW-1003">Cell membrane</keyword>
<keyword id="KW-0966">Cell projection</keyword>
<keyword id="KW-0968">Cytoplasmic vesicle</keyword>
<keyword id="KW-0333">Golgi apparatus</keyword>
<keyword id="KW-0449">Lipoprotein</keyword>
<keyword id="KW-0472">Membrane</keyword>
<keyword id="KW-0564">Palmitate</keyword>
<keyword id="KW-1185">Reference proteome</keyword>
<keyword id="KW-0677">Repeat</keyword>
<keyword id="KW-0770">Synapse</keyword>
<keyword id="KW-0808">Transferase</keyword>
<keyword id="KW-0812">Transmembrane</keyword>
<keyword id="KW-1133">Transmembrane helix</keyword>
<comment type="function">
    <text evidence="1 2">Palmitoyltransferase that catalyzes the addition of palmitate onto various protein substrates and is involved in a variety of cellular processes. Has no stringent fatty acid selectivity and in addition to palmitate can also transfer onto target proteins myristate from tetradecanoyl-CoA and stearate from octadecanoyl-CoA (By similarity). Palmitoyltransferase specific for a subset of neuronal proteins, including SNAP25, DLG4/PSD95, GAD2, SYT1 and HTT (By similarity). Also palmitoylates neuronal protein GPM6A as well as SPRED1 and SPRED3 (By similarity). Could also play a role in axonogenesis through the regulation of NTRK1 and the downstream ERK1/ERK2 signaling cascade (By similarity). May be involved in the sorting or targeting of critical proteins involved in the initiating events of endocytosis at the plasma membrane (By similarity). May play a role in Mg(2+) transport (By similarity). Could also palmitoylate DNAJC5 and regulate its localization to the Golgi membrane (By similarity). Palmitoylates CASP6, thereby preventing its dimerization and subsequent activation (By similarity).</text>
</comment>
<comment type="catalytic activity">
    <reaction evidence="2">
        <text>L-cysteinyl-[protein] + hexadecanoyl-CoA = S-hexadecanoyl-L-cysteinyl-[protein] + CoA</text>
        <dbReference type="Rhea" id="RHEA:36683"/>
        <dbReference type="Rhea" id="RHEA-COMP:10131"/>
        <dbReference type="Rhea" id="RHEA-COMP:11032"/>
        <dbReference type="ChEBI" id="CHEBI:29950"/>
        <dbReference type="ChEBI" id="CHEBI:57287"/>
        <dbReference type="ChEBI" id="CHEBI:57379"/>
        <dbReference type="ChEBI" id="CHEBI:74151"/>
        <dbReference type="EC" id="2.3.1.225"/>
    </reaction>
</comment>
<comment type="catalytic activity">
    <reaction evidence="1">
        <text>L-cysteinyl-[protein] + tetradecanoyl-CoA = S-tetradecanoyl-L-cysteinyl-[protein] + CoA</text>
        <dbReference type="Rhea" id="RHEA:59736"/>
        <dbReference type="Rhea" id="RHEA-COMP:10131"/>
        <dbReference type="Rhea" id="RHEA-COMP:15433"/>
        <dbReference type="ChEBI" id="CHEBI:29950"/>
        <dbReference type="ChEBI" id="CHEBI:57287"/>
        <dbReference type="ChEBI" id="CHEBI:57385"/>
        <dbReference type="ChEBI" id="CHEBI:143199"/>
    </reaction>
    <physiologicalReaction direction="left-to-right" evidence="1">
        <dbReference type="Rhea" id="RHEA:59737"/>
    </physiologicalReaction>
</comment>
<comment type="catalytic activity">
    <reaction evidence="1">
        <text>L-cysteinyl-[protein] + octadecanoyl-CoA = S-octadecanoyl-L-cysteinyl-[protein] + CoA</text>
        <dbReference type="Rhea" id="RHEA:59740"/>
        <dbReference type="Rhea" id="RHEA-COMP:10131"/>
        <dbReference type="Rhea" id="RHEA-COMP:15434"/>
        <dbReference type="ChEBI" id="CHEBI:29950"/>
        <dbReference type="ChEBI" id="CHEBI:57287"/>
        <dbReference type="ChEBI" id="CHEBI:57394"/>
        <dbReference type="ChEBI" id="CHEBI:143200"/>
    </reaction>
    <physiologicalReaction direction="left-to-right" evidence="1">
        <dbReference type="Rhea" id="RHEA:59741"/>
    </physiologicalReaction>
</comment>
<comment type="subunit">
    <text evidence="1 2 5 6">Interacts (via ANK repeats) with numerous proteins (via the consensus sequence motif [VIAP]-[VIT]-x-x-Q-P). Interacts (via ANK repeats) with CLIP3. Interacts (via ANK repeats) with HTT (By similarity). Interacts (via ANK repeats) with DNAJC5 (via C-terminus) (PubMed:25253725). Interacts (via ANK repeats) with MAP6. Interacts (via ANK repeats) with SNAP23 (By similarity). Interacts (via ANK repeats) with SNAP25 (PubMed:25253725, PubMed:26198635). Interacts (via ANK repeats) with EVL (By similarity). Interacts with SPRED1 and SPRED3 (By similarity). Interacts with GPM6A and OPTN (By similarity). May interact (via ANK repeats) with SPRED2 (By similarity). May interact with NTRK1; may regulate its localization and function (By similarity).</text>
</comment>
<comment type="subcellular location">
    <subcellularLocation>
        <location evidence="2">Golgi apparatus membrane</location>
        <topology evidence="3">Multi-pass membrane protein</topology>
    </subcellularLocation>
    <subcellularLocation>
        <location evidence="2">Cytoplasmic vesicle membrane</location>
        <topology evidence="3">Multi-pass membrane protein</topology>
    </subcellularLocation>
    <subcellularLocation>
        <location evidence="2">Presynaptic cell membrane</location>
        <topology evidence="3">Multi-pass membrane protein</topology>
    </subcellularLocation>
    <text evidence="2">Low extracellular Mg(2+) induces increase in Golgi and in post-Golgi membrane vesicles.</text>
</comment>
<comment type="domain">
    <text evidence="2">The DHHC domain is required for palmitoyltransferase activity.</text>
</comment>
<comment type="PTM">
    <text evidence="2">Autopalmitoylated. Autopalmitoylation has a regulatory role in ZDHHC17-mediated Mg(2+) transport.</text>
</comment>
<comment type="similarity">
    <text evidence="7">Belongs to the DHHC palmitoyltransferase family. AKR/ZDHHC17 subfamily.</text>
</comment>
<name>ZDH17_RAT</name>
<feature type="chain" id="PRO_0000433513" description="Palmitoyltransferase ZDHHC17">
    <location>
        <begin position="1"/>
        <end position="622"/>
    </location>
</feature>
<feature type="topological domain" description="Cytoplasmic" evidence="7">
    <location>
        <begin position="1"/>
        <end position="294"/>
    </location>
</feature>
<feature type="transmembrane region" description="Helical" evidence="3">
    <location>
        <begin position="295"/>
        <end position="315"/>
    </location>
</feature>
<feature type="transmembrane region" description="Helical" evidence="3">
    <location>
        <begin position="316"/>
        <end position="336"/>
    </location>
</feature>
<feature type="topological domain" description="Lumenal" evidence="7">
    <location>
        <begin position="337"/>
        <end position="347"/>
    </location>
</feature>
<feature type="transmembrane region" description="Helical" evidence="3">
    <location>
        <begin position="348"/>
        <end position="368"/>
    </location>
</feature>
<feature type="topological domain" description="Cytoplasmic" evidence="7">
    <location>
        <begin position="369"/>
        <end position="371"/>
    </location>
</feature>
<feature type="transmembrane region" description="Helical" evidence="3">
    <location>
        <begin position="372"/>
        <end position="392"/>
    </location>
</feature>
<feature type="topological domain" description="Lumenal" evidence="7">
    <location>
        <begin position="393"/>
        <end position="470"/>
    </location>
</feature>
<feature type="transmembrane region" description="Helical" evidence="3">
    <location>
        <begin position="471"/>
        <end position="491"/>
    </location>
</feature>
<feature type="topological domain" description="Cytoplasmic" evidence="7">
    <location>
        <begin position="492"/>
        <end position="506"/>
    </location>
</feature>
<feature type="transmembrane region" description="Helical" evidence="3">
    <location>
        <begin position="507"/>
        <end position="526"/>
    </location>
</feature>
<feature type="topological domain" description="Lumenal" evidence="7">
    <location>
        <begin position="527"/>
        <end position="529"/>
    </location>
</feature>
<feature type="transmembrane region" description="Helical" evidence="3">
    <location>
        <begin position="530"/>
        <end position="552"/>
    </location>
</feature>
<feature type="topological domain" description="Cytoplasmic" evidence="7">
    <location>
        <begin position="553"/>
        <end position="622"/>
    </location>
</feature>
<feature type="repeat" description="ANK 1" evidence="2">
    <location>
        <begin position="41"/>
        <end position="76"/>
    </location>
</feature>
<feature type="repeat" description="ANK 2" evidence="3">
    <location>
        <begin position="79"/>
        <end position="108"/>
    </location>
</feature>
<feature type="repeat" description="ANK 3" evidence="3">
    <location>
        <begin position="113"/>
        <end position="142"/>
    </location>
</feature>
<feature type="repeat" description="ANK 4" evidence="3">
    <location>
        <begin position="146"/>
        <end position="175"/>
    </location>
</feature>
<feature type="repeat" description="ANK 5" evidence="3">
    <location>
        <begin position="179"/>
        <end position="209"/>
    </location>
</feature>
<feature type="repeat" description="ANK 6" evidence="3">
    <location>
        <begin position="214"/>
        <end position="243"/>
    </location>
</feature>
<feature type="repeat" description="ANK 7" evidence="3">
    <location>
        <begin position="247"/>
        <end position="276"/>
    </location>
</feature>
<feature type="domain" description="DHHC" evidence="4">
    <location>
        <begin position="427"/>
        <end position="477"/>
    </location>
</feature>
<feature type="region of interest" description="Necessary and sufficient for interaction with DNAJC5 and SNAP25" evidence="1">
    <location>
        <begin position="1"/>
        <end position="295"/>
    </location>
</feature>
<feature type="active site" description="S-palmitoyl cysteine intermediate" evidence="2">
    <location>
        <position position="457"/>
    </location>
</feature>
<feature type="sequence conflict" description="In Ref. 1; AAX73395." evidence="7" ref="1">
    <original>G</original>
    <variation>C</variation>
    <location>
        <position position="465"/>
    </location>
</feature>
<evidence type="ECO:0000250" key="1">
    <source>
        <dbReference type="UniProtKB" id="Q80TN5"/>
    </source>
</evidence>
<evidence type="ECO:0000250" key="2">
    <source>
        <dbReference type="UniProtKB" id="Q8IUH5"/>
    </source>
</evidence>
<evidence type="ECO:0000255" key="3"/>
<evidence type="ECO:0000255" key="4">
    <source>
        <dbReference type="PROSITE-ProRule" id="PRU00067"/>
    </source>
</evidence>
<evidence type="ECO:0000269" key="5">
    <source>
    </source>
</evidence>
<evidence type="ECO:0000269" key="6">
    <source>
    </source>
</evidence>
<evidence type="ECO:0000305" key="7"/>
<evidence type="ECO:0000312" key="8">
    <source>
        <dbReference type="RGD" id="1595790"/>
    </source>
</evidence>
<proteinExistence type="evidence at protein level"/>
<organism>
    <name type="scientific">Rattus norvegicus</name>
    <name type="common">Rat</name>
    <dbReference type="NCBI Taxonomy" id="10116"/>
    <lineage>
        <taxon>Eukaryota</taxon>
        <taxon>Metazoa</taxon>
        <taxon>Chordata</taxon>
        <taxon>Craniata</taxon>
        <taxon>Vertebrata</taxon>
        <taxon>Euteleostomi</taxon>
        <taxon>Mammalia</taxon>
        <taxon>Eutheria</taxon>
        <taxon>Euarchontoglires</taxon>
        <taxon>Glires</taxon>
        <taxon>Rodentia</taxon>
        <taxon>Myomorpha</taxon>
        <taxon>Muroidea</taxon>
        <taxon>Muridae</taxon>
        <taxon>Murinae</taxon>
        <taxon>Rattus</taxon>
    </lineage>
</organism>
<dbReference type="EC" id="2.3.1.225" evidence="1"/>
<dbReference type="EC" id="2.3.1.-" evidence="1"/>
<dbReference type="EMBL" id="AY886533">
    <property type="protein sequence ID" value="AAX73395.1"/>
    <property type="molecule type" value="mRNA"/>
</dbReference>
<dbReference type="EMBL" id="AABR06049566">
    <property type="status" value="NOT_ANNOTATED_CDS"/>
    <property type="molecule type" value="Genomic_DNA"/>
</dbReference>
<dbReference type="EMBL" id="AABR06049567">
    <property type="status" value="NOT_ANNOTATED_CDS"/>
    <property type="molecule type" value="Genomic_DNA"/>
</dbReference>
<dbReference type="EMBL" id="AABR06049568">
    <property type="status" value="NOT_ANNOTATED_CDS"/>
    <property type="molecule type" value="Genomic_DNA"/>
</dbReference>
<dbReference type="RefSeq" id="NP_001034429.1">
    <property type="nucleotide sequence ID" value="NM_001039340.1"/>
</dbReference>
<dbReference type="SMR" id="E9PTT0"/>
<dbReference type="FunCoup" id="E9PTT0">
    <property type="interactions" value="3650"/>
</dbReference>
<dbReference type="STRING" id="10116.ENSRNOP00000005078"/>
<dbReference type="iPTMnet" id="E9PTT0"/>
<dbReference type="PhosphoSitePlus" id="E9PTT0"/>
<dbReference type="SwissPalm" id="E9PTT0"/>
<dbReference type="jPOST" id="E9PTT0"/>
<dbReference type="PaxDb" id="10116-ENSRNOP00000005078"/>
<dbReference type="PeptideAtlas" id="E9PTT0"/>
<dbReference type="GeneID" id="366889"/>
<dbReference type="KEGG" id="rno:366889"/>
<dbReference type="AGR" id="RGD:1595790"/>
<dbReference type="CTD" id="23390"/>
<dbReference type="RGD" id="1595790">
    <property type="gene designation" value="Zdhhc17"/>
</dbReference>
<dbReference type="VEuPathDB" id="HostDB:ENSRNOG00000003803"/>
<dbReference type="eggNOG" id="KOG0509">
    <property type="taxonomic scope" value="Eukaryota"/>
</dbReference>
<dbReference type="HOGENOM" id="CLU_012510_3_1_1"/>
<dbReference type="InParanoid" id="E9PTT0"/>
<dbReference type="OrthoDB" id="3037at9989"/>
<dbReference type="TreeFam" id="TF317342"/>
<dbReference type="PRO" id="PR:E9PTT0"/>
<dbReference type="Proteomes" id="UP000002494">
    <property type="component" value="Chromosome 7"/>
</dbReference>
<dbReference type="Bgee" id="ENSRNOG00000003803">
    <property type="expression patterns" value="Expressed in cerebellum and 18 other cell types or tissues"/>
</dbReference>
<dbReference type="GO" id="GO:0042995">
    <property type="term" value="C:cell projection"/>
    <property type="evidence" value="ECO:0007669"/>
    <property type="project" value="UniProtKB-KW"/>
</dbReference>
<dbReference type="GO" id="GO:0098978">
    <property type="term" value="C:glutamatergic synapse"/>
    <property type="evidence" value="ECO:0000266"/>
    <property type="project" value="RGD"/>
</dbReference>
<dbReference type="GO" id="GO:0005794">
    <property type="term" value="C:Golgi apparatus"/>
    <property type="evidence" value="ECO:0000250"/>
    <property type="project" value="UniProtKB"/>
</dbReference>
<dbReference type="GO" id="GO:0000139">
    <property type="term" value="C:Golgi membrane"/>
    <property type="evidence" value="ECO:0000266"/>
    <property type="project" value="RGD"/>
</dbReference>
<dbReference type="GO" id="GO:0030660">
    <property type="term" value="C:Golgi-associated vesicle membrane"/>
    <property type="evidence" value="ECO:0000266"/>
    <property type="project" value="RGD"/>
</dbReference>
<dbReference type="GO" id="GO:0140240">
    <property type="term" value="C:perforant pathway to dendrate granule cell synapse"/>
    <property type="evidence" value="ECO:0000266"/>
    <property type="project" value="RGD"/>
</dbReference>
<dbReference type="GO" id="GO:0150051">
    <property type="term" value="C:postsynaptic Golgi apparatus"/>
    <property type="evidence" value="ECO:0000266"/>
    <property type="project" value="RGD"/>
</dbReference>
<dbReference type="GO" id="GO:0042734">
    <property type="term" value="C:presynaptic membrane"/>
    <property type="evidence" value="ECO:0007669"/>
    <property type="project" value="UniProtKB-SubCell"/>
</dbReference>
<dbReference type="GO" id="GO:0042802">
    <property type="term" value="F:identical protein binding"/>
    <property type="evidence" value="ECO:0000266"/>
    <property type="project" value="RGD"/>
</dbReference>
<dbReference type="GO" id="GO:0016409">
    <property type="term" value="F:palmitoyltransferase activity"/>
    <property type="evidence" value="ECO:0000250"/>
    <property type="project" value="UniProtKB"/>
</dbReference>
<dbReference type="GO" id="GO:0019705">
    <property type="term" value="F:protein-cysteine S-myristoyltransferase activity"/>
    <property type="evidence" value="ECO:0007669"/>
    <property type="project" value="RHEA"/>
</dbReference>
<dbReference type="GO" id="GO:0019706">
    <property type="term" value="F:protein-cysteine S-palmitoyltransferase activity"/>
    <property type="evidence" value="ECO:0000250"/>
    <property type="project" value="UniProtKB"/>
</dbReference>
<dbReference type="GO" id="GO:0140439">
    <property type="term" value="F:protein-cysteine S-stearoyltransferase activity"/>
    <property type="evidence" value="ECO:0007669"/>
    <property type="project" value="RHEA"/>
</dbReference>
<dbReference type="GO" id="GO:0005102">
    <property type="term" value="F:signaling receptor binding"/>
    <property type="evidence" value="ECO:0000266"/>
    <property type="project" value="RGD"/>
</dbReference>
<dbReference type="GO" id="GO:0007409">
    <property type="term" value="P:axonogenesis"/>
    <property type="evidence" value="ECO:0000250"/>
    <property type="project" value="UniProtKB"/>
</dbReference>
<dbReference type="GO" id="GO:0042953">
    <property type="term" value="P:lipoprotein transport"/>
    <property type="evidence" value="ECO:0000266"/>
    <property type="project" value="RGD"/>
</dbReference>
<dbReference type="GO" id="GO:0018345">
    <property type="term" value="P:protein palmitoylation"/>
    <property type="evidence" value="ECO:0000250"/>
    <property type="project" value="UniProtKB"/>
</dbReference>
<dbReference type="GO" id="GO:0070372">
    <property type="term" value="P:regulation of ERK1 and ERK2 cascade"/>
    <property type="evidence" value="ECO:0000250"/>
    <property type="project" value="UniProtKB"/>
</dbReference>
<dbReference type="GO" id="GO:0098987">
    <property type="term" value="P:regulation of modification of synapse structure, modulating synaptic transmission"/>
    <property type="evidence" value="ECO:0000266"/>
    <property type="project" value="RGD"/>
</dbReference>
<dbReference type="GO" id="GO:0051386">
    <property type="term" value="P:regulation of neurotrophin TRK receptor signaling pathway"/>
    <property type="evidence" value="ECO:0000250"/>
    <property type="project" value="UniProtKB"/>
</dbReference>
<dbReference type="GO" id="GO:0043067">
    <property type="term" value="P:regulation of programmed cell death"/>
    <property type="evidence" value="ECO:0000266"/>
    <property type="project" value="RGD"/>
</dbReference>
<dbReference type="FunFam" id="1.25.40.20:FF:000035">
    <property type="entry name" value="Palmitoyltransferase"/>
    <property type="match status" value="1"/>
</dbReference>
<dbReference type="Gene3D" id="1.25.40.20">
    <property type="entry name" value="Ankyrin repeat-containing domain"/>
    <property type="match status" value="1"/>
</dbReference>
<dbReference type="InterPro" id="IPR002110">
    <property type="entry name" value="Ankyrin_rpt"/>
</dbReference>
<dbReference type="InterPro" id="IPR036770">
    <property type="entry name" value="Ankyrin_rpt-contain_sf"/>
</dbReference>
<dbReference type="InterPro" id="IPR001594">
    <property type="entry name" value="Palmitoyltrfase_DHHC"/>
</dbReference>
<dbReference type="PANTHER" id="PTHR24161">
    <property type="entry name" value="ANK_REP_REGION DOMAIN-CONTAINING PROTEIN-RELATED"/>
    <property type="match status" value="1"/>
</dbReference>
<dbReference type="PANTHER" id="PTHR24161:SF18">
    <property type="entry name" value="PALMITOYLTRANSFERASE ZDHHC17"/>
    <property type="match status" value="1"/>
</dbReference>
<dbReference type="Pfam" id="PF12796">
    <property type="entry name" value="Ank_2"/>
    <property type="match status" value="2"/>
</dbReference>
<dbReference type="Pfam" id="PF01529">
    <property type="entry name" value="DHHC"/>
    <property type="match status" value="1"/>
</dbReference>
<dbReference type="PRINTS" id="PR01415">
    <property type="entry name" value="ANKYRIN"/>
</dbReference>
<dbReference type="SMART" id="SM00248">
    <property type="entry name" value="ANK"/>
    <property type="match status" value="5"/>
</dbReference>
<dbReference type="SUPFAM" id="SSF48403">
    <property type="entry name" value="Ankyrin repeat"/>
    <property type="match status" value="1"/>
</dbReference>
<dbReference type="PROSITE" id="PS50297">
    <property type="entry name" value="ANK_REP_REGION"/>
    <property type="match status" value="1"/>
</dbReference>
<dbReference type="PROSITE" id="PS50088">
    <property type="entry name" value="ANK_REPEAT"/>
    <property type="match status" value="5"/>
</dbReference>
<dbReference type="PROSITE" id="PS50216">
    <property type="entry name" value="DHHC"/>
    <property type="match status" value="1"/>
</dbReference>
<protein>
    <recommendedName>
        <fullName evidence="7">Palmitoyltransferase ZDHHC17</fullName>
        <ecNumber evidence="1">2.3.1.225</ecNumber>
    </recommendedName>
    <alternativeName>
        <fullName evidence="1">Acyltransferase ZDHHC17</fullName>
        <ecNumber evidence="1">2.3.1.-</ecNumber>
    </alternativeName>
    <alternativeName>
        <fullName evidence="8">Zinc finger DHHC domain-containing protein 17</fullName>
    </alternativeName>
</protein>